<evidence type="ECO:0000305" key="1"/>
<comment type="similarity">
    <text evidence="1">Belongs to the poxviruses B9 family.</text>
</comment>
<name>VT4_RFVKA</name>
<dbReference type="EMBL" id="M17433">
    <property type="status" value="NOT_ANNOTATED_CDS"/>
    <property type="molecule type" value="Genomic_DNA"/>
</dbReference>
<dbReference type="EMBL" id="AF170722">
    <property type="protein sequence ID" value="AAF17887.1"/>
    <property type="molecule type" value="Genomic_DNA"/>
</dbReference>
<dbReference type="EMBL" id="AF170722">
    <property type="protein sequence ID" value="AAF18040.1"/>
    <property type="molecule type" value="Genomic_DNA"/>
</dbReference>
<dbReference type="PIR" id="F43692">
    <property type="entry name" value="F43692"/>
</dbReference>
<dbReference type="RefSeq" id="NP_051890.1">
    <property type="nucleotide sequence ID" value="NC_001266.1"/>
</dbReference>
<dbReference type="RefSeq" id="NP_052046.1">
    <property type="nucleotide sequence ID" value="NC_001266.1"/>
</dbReference>
<dbReference type="SMR" id="P25948"/>
<dbReference type="KEGG" id="vg:1486848"/>
<dbReference type="KEGG" id="vg:1487001"/>
<dbReference type="Proteomes" id="UP000000868">
    <property type="component" value="Segment"/>
</dbReference>
<dbReference type="Gene3D" id="2.60.240.30">
    <property type="match status" value="1"/>
</dbReference>
<dbReference type="InterPro" id="IPR016399">
    <property type="entry name" value="Apoptosis_reg_M-T4"/>
</dbReference>
<dbReference type="InterPro" id="IPR038687">
    <property type="entry name" value="M-T4_sf"/>
</dbReference>
<dbReference type="InterPro" id="IPR007579">
    <property type="entry name" value="Poxvirus_T4p_C"/>
</dbReference>
<dbReference type="InterPro" id="IPR007580">
    <property type="entry name" value="Poxvirus_T4p_N"/>
</dbReference>
<dbReference type="Pfam" id="PF04490">
    <property type="entry name" value="Pox_T4_C"/>
    <property type="match status" value="1"/>
</dbReference>
<dbReference type="Pfam" id="PF04491">
    <property type="entry name" value="Pox_T4_N"/>
    <property type="match status" value="1"/>
</dbReference>
<dbReference type="PIRSF" id="PIRSF003796">
    <property type="entry name" value="Apoptosisregulator_M-T4"/>
    <property type="match status" value="1"/>
</dbReference>
<feature type="chain" id="PRO_0000099361" description="T4 protein">
    <location>
        <begin position="1"/>
        <end position="225"/>
    </location>
</feature>
<organism>
    <name type="scientific">Rabbit fibroma virus (strain Kasza)</name>
    <name type="common">RFV</name>
    <name type="synonym">Shope fibroma virus (strain Kasza)</name>
    <dbReference type="NCBI Taxonomy" id="10272"/>
    <lineage>
        <taxon>Viruses</taxon>
        <taxon>Varidnaviria</taxon>
        <taxon>Bamfordvirae</taxon>
        <taxon>Nucleocytoviricota</taxon>
        <taxon>Pokkesviricetes</taxon>
        <taxon>Chitovirales</taxon>
        <taxon>Poxviridae</taxon>
        <taxon>Chordopoxvirinae</taxon>
        <taxon>Leporipoxvirus</taxon>
        <taxon>Rabbit fibroma virus</taxon>
    </lineage>
</organism>
<reference key="1">
    <citation type="journal article" date="1987" name="Virology">
        <title>Tumorigenic poxviruses: genomic organization and DNA sequence of the telomeric region of the Shope fibroma virus genome.</title>
        <authorList>
            <person name="Upton C."/>
            <person name="Delange A.M."/>
            <person name="McFadden G."/>
        </authorList>
    </citation>
    <scope>NUCLEOTIDE SEQUENCE [GENOMIC DNA]</scope>
</reference>
<reference key="2">
    <citation type="journal article" date="1991" name="Virology">
        <title>Sequence and analysis of a portion of the genomes of Shope fibroma virus and malignant rabbit fibroma virus that is important for viral replication in lymphocytes.</title>
        <authorList>
            <person name="Strayer D.S."/>
            <person name="Jerng H.H."/>
            <person name="O'Connor K."/>
        </authorList>
    </citation>
    <scope>NUCLEOTIDE SEQUENCE [GENOMIC DNA]</scope>
</reference>
<reference key="3">
    <citation type="journal article" date="1999" name="Virology">
        <title>The complete genome sequence of shope (Rabbit) fibroma virus.</title>
        <authorList>
            <person name="Willer D.O."/>
            <person name="McFadden G."/>
            <person name="Evans D.H."/>
        </authorList>
    </citation>
    <scope>NUCLEOTIDE SEQUENCE [LARGE SCALE GENOMIC DNA]</scope>
</reference>
<organismHost>
    <name type="scientific">Oryctolagus cuniculus</name>
    <name type="common">Rabbit</name>
    <dbReference type="NCBI Taxonomy" id="9986"/>
</organismHost>
<sequence>MESVVLLLAFISLVCGYVIDPCTPQERSTWHVSIKLCIRVQEYKISSRGCRLTQGPGGLIATGNGFKIFAYDECGHDEHSFLLTNIRESVYASGHGMYAEISNNVTYLDLVSPCARNITIIVSCDDITINAYGKNIDELHPDVTITTLIDTSCVRGHSFAYSINTLCTERLSGESCEQLACQAIKGSQHENYLKACELNAPEQYMFKEYKPHQRPHVAKVLRDEL</sequence>
<accession>P25948</accession>
<accession>Q9PWZ5</accession>
<keyword id="KW-1185">Reference proteome</keyword>
<gene>
    <name type="ORF">T4</name>
</gene>
<proteinExistence type="inferred from homology"/>
<protein>
    <recommendedName>
        <fullName>T4 protein</fullName>
    </recommendedName>
</protein>